<accession>Q5T9A4</accession>
<accession>A8K3H1</accession>
<accession>Q6ZRB5</accession>
<accession>Q9BUK4</accession>
<accession>Q9ULE7</accession>
<reference key="1">
    <citation type="journal article" date="1999" name="DNA Res.">
        <title>Prediction of the coding sequences of unidentified human genes. XV. The complete sequences of 100 new cDNA clones from brain which code for large proteins in vitro.</title>
        <authorList>
            <person name="Nagase T."/>
            <person name="Ishikawa K."/>
            <person name="Kikuno R."/>
            <person name="Hirosawa M."/>
            <person name="Nomura N."/>
            <person name="Ohara O."/>
        </authorList>
    </citation>
    <scope>NUCLEOTIDE SEQUENCE [LARGE SCALE MRNA] (ISOFORM 3)</scope>
    <source>
        <tissue>Brain</tissue>
    </source>
</reference>
<reference key="2">
    <citation type="journal article" date="2004" name="Nat. Genet.">
        <title>Complete sequencing and characterization of 21,243 full-length human cDNAs.</title>
        <authorList>
            <person name="Ota T."/>
            <person name="Suzuki Y."/>
            <person name="Nishikawa T."/>
            <person name="Otsuki T."/>
            <person name="Sugiyama T."/>
            <person name="Irie R."/>
            <person name="Wakamatsu A."/>
            <person name="Hayashi K."/>
            <person name="Sato H."/>
            <person name="Nagai K."/>
            <person name="Kimura K."/>
            <person name="Makita H."/>
            <person name="Sekine M."/>
            <person name="Obayashi M."/>
            <person name="Nishi T."/>
            <person name="Shibahara T."/>
            <person name="Tanaka T."/>
            <person name="Ishii S."/>
            <person name="Yamamoto J."/>
            <person name="Saito K."/>
            <person name="Kawai Y."/>
            <person name="Isono Y."/>
            <person name="Nakamura Y."/>
            <person name="Nagahari K."/>
            <person name="Murakami K."/>
            <person name="Yasuda T."/>
            <person name="Iwayanagi T."/>
            <person name="Wagatsuma M."/>
            <person name="Shiratori A."/>
            <person name="Sudo H."/>
            <person name="Hosoiri T."/>
            <person name="Kaku Y."/>
            <person name="Kodaira H."/>
            <person name="Kondo H."/>
            <person name="Sugawara M."/>
            <person name="Takahashi M."/>
            <person name="Kanda K."/>
            <person name="Yokoi T."/>
            <person name="Furuya T."/>
            <person name="Kikkawa E."/>
            <person name="Omura Y."/>
            <person name="Abe K."/>
            <person name="Kamihara K."/>
            <person name="Katsuta N."/>
            <person name="Sato K."/>
            <person name="Tanikawa M."/>
            <person name="Yamazaki M."/>
            <person name="Ninomiya K."/>
            <person name="Ishibashi T."/>
            <person name="Yamashita H."/>
            <person name="Murakawa K."/>
            <person name="Fujimori K."/>
            <person name="Tanai H."/>
            <person name="Kimata M."/>
            <person name="Watanabe M."/>
            <person name="Hiraoka S."/>
            <person name="Chiba Y."/>
            <person name="Ishida S."/>
            <person name="Ono Y."/>
            <person name="Takiguchi S."/>
            <person name="Watanabe S."/>
            <person name="Yosida M."/>
            <person name="Hotuta T."/>
            <person name="Kusano J."/>
            <person name="Kanehori K."/>
            <person name="Takahashi-Fujii A."/>
            <person name="Hara H."/>
            <person name="Tanase T.-O."/>
            <person name="Nomura Y."/>
            <person name="Togiya S."/>
            <person name="Komai F."/>
            <person name="Hara R."/>
            <person name="Takeuchi K."/>
            <person name="Arita M."/>
            <person name="Imose N."/>
            <person name="Musashino K."/>
            <person name="Yuuki H."/>
            <person name="Oshima A."/>
            <person name="Sasaki N."/>
            <person name="Aotsuka S."/>
            <person name="Yoshikawa Y."/>
            <person name="Matsunawa H."/>
            <person name="Ichihara T."/>
            <person name="Shiohata N."/>
            <person name="Sano S."/>
            <person name="Moriya S."/>
            <person name="Momiyama H."/>
            <person name="Satoh N."/>
            <person name="Takami S."/>
            <person name="Terashima Y."/>
            <person name="Suzuki O."/>
            <person name="Nakagawa S."/>
            <person name="Senoh A."/>
            <person name="Mizoguchi H."/>
            <person name="Goto Y."/>
            <person name="Shimizu F."/>
            <person name="Wakebe H."/>
            <person name="Hishigaki H."/>
            <person name="Watanabe T."/>
            <person name="Sugiyama A."/>
            <person name="Takemoto M."/>
            <person name="Kawakami B."/>
            <person name="Yamazaki M."/>
            <person name="Watanabe K."/>
            <person name="Kumagai A."/>
            <person name="Itakura S."/>
            <person name="Fukuzumi Y."/>
            <person name="Fujimori Y."/>
            <person name="Komiyama M."/>
            <person name="Tashiro H."/>
            <person name="Tanigami A."/>
            <person name="Fujiwara T."/>
            <person name="Ono T."/>
            <person name="Yamada K."/>
            <person name="Fujii Y."/>
            <person name="Ozaki K."/>
            <person name="Hirao M."/>
            <person name="Ohmori Y."/>
            <person name="Kawabata A."/>
            <person name="Hikiji T."/>
            <person name="Kobatake N."/>
            <person name="Inagaki H."/>
            <person name="Ikema Y."/>
            <person name="Okamoto S."/>
            <person name="Okitani R."/>
            <person name="Kawakami T."/>
            <person name="Noguchi S."/>
            <person name="Itoh T."/>
            <person name="Shigeta K."/>
            <person name="Senba T."/>
            <person name="Matsumura K."/>
            <person name="Nakajima Y."/>
            <person name="Mizuno T."/>
            <person name="Morinaga M."/>
            <person name="Sasaki M."/>
            <person name="Togashi T."/>
            <person name="Oyama M."/>
            <person name="Hata H."/>
            <person name="Watanabe M."/>
            <person name="Komatsu T."/>
            <person name="Mizushima-Sugano J."/>
            <person name="Satoh T."/>
            <person name="Shirai Y."/>
            <person name="Takahashi Y."/>
            <person name="Nakagawa K."/>
            <person name="Okumura K."/>
            <person name="Nagase T."/>
            <person name="Nomura N."/>
            <person name="Kikuchi H."/>
            <person name="Masuho Y."/>
            <person name="Yamashita R."/>
            <person name="Nakai K."/>
            <person name="Yada T."/>
            <person name="Nakamura Y."/>
            <person name="Ohara O."/>
            <person name="Isogai T."/>
            <person name="Sugano S."/>
        </authorList>
    </citation>
    <scope>NUCLEOTIDE SEQUENCE [LARGE SCALE MRNA] (ISOFORMS 1 AND 2)</scope>
    <source>
        <tissue>Thymus</tissue>
    </source>
</reference>
<reference key="3">
    <citation type="journal article" date="2006" name="Nature">
        <title>The DNA sequence and biological annotation of human chromosome 1.</title>
        <authorList>
            <person name="Gregory S.G."/>
            <person name="Barlow K.F."/>
            <person name="McLay K.E."/>
            <person name="Kaul R."/>
            <person name="Swarbreck D."/>
            <person name="Dunham A."/>
            <person name="Scott C.E."/>
            <person name="Howe K.L."/>
            <person name="Woodfine K."/>
            <person name="Spencer C.C.A."/>
            <person name="Jones M.C."/>
            <person name="Gillson C."/>
            <person name="Searle S."/>
            <person name="Zhou Y."/>
            <person name="Kokocinski F."/>
            <person name="McDonald L."/>
            <person name="Evans R."/>
            <person name="Phillips K."/>
            <person name="Atkinson A."/>
            <person name="Cooper R."/>
            <person name="Jones C."/>
            <person name="Hall R.E."/>
            <person name="Andrews T.D."/>
            <person name="Lloyd C."/>
            <person name="Ainscough R."/>
            <person name="Almeida J.P."/>
            <person name="Ambrose K.D."/>
            <person name="Anderson F."/>
            <person name="Andrew R.W."/>
            <person name="Ashwell R.I.S."/>
            <person name="Aubin K."/>
            <person name="Babbage A.K."/>
            <person name="Bagguley C.L."/>
            <person name="Bailey J."/>
            <person name="Beasley H."/>
            <person name="Bethel G."/>
            <person name="Bird C.P."/>
            <person name="Bray-Allen S."/>
            <person name="Brown J.Y."/>
            <person name="Brown A.J."/>
            <person name="Buckley D."/>
            <person name="Burton J."/>
            <person name="Bye J."/>
            <person name="Carder C."/>
            <person name="Chapman J.C."/>
            <person name="Clark S.Y."/>
            <person name="Clarke G."/>
            <person name="Clee C."/>
            <person name="Cobley V."/>
            <person name="Collier R.E."/>
            <person name="Corby N."/>
            <person name="Coville G.J."/>
            <person name="Davies J."/>
            <person name="Deadman R."/>
            <person name="Dunn M."/>
            <person name="Earthrowl M."/>
            <person name="Ellington A.G."/>
            <person name="Errington H."/>
            <person name="Frankish A."/>
            <person name="Frankland J."/>
            <person name="French L."/>
            <person name="Garner P."/>
            <person name="Garnett J."/>
            <person name="Gay L."/>
            <person name="Ghori M.R.J."/>
            <person name="Gibson R."/>
            <person name="Gilby L.M."/>
            <person name="Gillett W."/>
            <person name="Glithero R.J."/>
            <person name="Grafham D.V."/>
            <person name="Griffiths C."/>
            <person name="Griffiths-Jones S."/>
            <person name="Grocock R."/>
            <person name="Hammond S."/>
            <person name="Harrison E.S.I."/>
            <person name="Hart E."/>
            <person name="Haugen E."/>
            <person name="Heath P.D."/>
            <person name="Holmes S."/>
            <person name="Holt K."/>
            <person name="Howden P.J."/>
            <person name="Hunt A.R."/>
            <person name="Hunt S.E."/>
            <person name="Hunter G."/>
            <person name="Isherwood J."/>
            <person name="James R."/>
            <person name="Johnson C."/>
            <person name="Johnson D."/>
            <person name="Joy A."/>
            <person name="Kay M."/>
            <person name="Kershaw J.K."/>
            <person name="Kibukawa M."/>
            <person name="Kimberley A.M."/>
            <person name="King A."/>
            <person name="Knights A.J."/>
            <person name="Lad H."/>
            <person name="Laird G."/>
            <person name="Lawlor S."/>
            <person name="Leongamornlert D.A."/>
            <person name="Lloyd D.M."/>
            <person name="Loveland J."/>
            <person name="Lovell J."/>
            <person name="Lush M.J."/>
            <person name="Lyne R."/>
            <person name="Martin S."/>
            <person name="Mashreghi-Mohammadi M."/>
            <person name="Matthews L."/>
            <person name="Matthews N.S.W."/>
            <person name="McLaren S."/>
            <person name="Milne S."/>
            <person name="Mistry S."/>
            <person name="Moore M.J.F."/>
            <person name="Nickerson T."/>
            <person name="O'Dell C.N."/>
            <person name="Oliver K."/>
            <person name="Palmeiri A."/>
            <person name="Palmer S.A."/>
            <person name="Parker A."/>
            <person name="Patel D."/>
            <person name="Pearce A.V."/>
            <person name="Peck A.I."/>
            <person name="Pelan S."/>
            <person name="Phelps K."/>
            <person name="Phillimore B.J."/>
            <person name="Plumb R."/>
            <person name="Rajan J."/>
            <person name="Raymond C."/>
            <person name="Rouse G."/>
            <person name="Saenphimmachak C."/>
            <person name="Sehra H.K."/>
            <person name="Sheridan E."/>
            <person name="Shownkeen R."/>
            <person name="Sims S."/>
            <person name="Skuce C.D."/>
            <person name="Smith M."/>
            <person name="Steward C."/>
            <person name="Subramanian S."/>
            <person name="Sycamore N."/>
            <person name="Tracey A."/>
            <person name="Tromans A."/>
            <person name="Van Helmond Z."/>
            <person name="Wall M."/>
            <person name="Wallis J.M."/>
            <person name="White S."/>
            <person name="Whitehead S.L."/>
            <person name="Wilkinson J.E."/>
            <person name="Willey D.L."/>
            <person name="Williams H."/>
            <person name="Wilming L."/>
            <person name="Wray P.W."/>
            <person name="Wu Z."/>
            <person name="Coulson A."/>
            <person name="Vaudin M."/>
            <person name="Sulston J.E."/>
            <person name="Durbin R.M."/>
            <person name="Hubbard T."/>
            <person name="Wooster R."/>
            <person name="Dunham I."/>
            <person name="Carter N.P."/>
            <person name="McVean G."/>
            <person name="Ross M.T."/>
            <person name="Harrow J."/>
            <person name="Olson M.V."/>
            <person name="Beck S."/>
            <person name="Rogers J."/>
            <person name="Bentley D.R."/>
        </authorList>
    </citation>
    <scope>NUCLEOTIDE SEQUENCE [LARGE SCALE GENOMIC DNA]</scope>
</reference>
<reference key="4">
    <citation type="submission" date="2005-07" db="EMBL/GenBank/DDBJ databases">
        <authorList>
            <person name="Mural R.J."/>
            <person name="Istrail S."/>
            <person name="Sutton G.G."/>
            <person name="Florea L."/>
            <person name="Halpern A.L."/>
            <person name="Mobarry C.M."/>
            <person name="Lippert R."/>
            <person name="Walenz B."/>
            <person name="Shatkay H."/>
            <person name="Dew I."/>
            <person name="Miller J.R."/>
            <person name="Flanigan M.J."/>
            <person name="Edwards N.J."/>
            <person name="Bolanos R."/>
            <person name="Fasulo D."/>
            <person name="Halldorsson B.V."/>
            <person name="Hannenhalli S."/>
            <person name="Turner R."/>
            <person name="Yooseph S."/>
            <person name="Lu F."/>
            <person name="Nusskern D.R."/>
            <person name="Shue B.C."/>
            <person name="Zheng X.H."/>
            <person name="Zhong F."/>
            <person name="Delcher A.L."/>
            <person name="Huson D.H."/>
            <person name="Kravitz S.A."/>
            <person name="Mouchard L."/>
            <person name="Reinert K."/>
            <person name="Remington K.A."/>
            <person name="Clark A.G."/>
            <person name="Waterman M.S."/>
            <person name="Eichler E.E."/>
            <person name="Adams M.D."/>
            <person name="Hunkapiller M.W."/>
            <person name="Myers E.W."/>
            <person name="Venter J.C."/>
        </authorList>
    </citation>
    <scope>NUCLEOTIDE SEQUENCE [LARGE SCALE GENOMIC DNA]</scope>
</reference>
<reference key="5">
    <citation type="journal article" date="2004" name="Genome Res.">
        <title>The status, quality, and expansion of the NIH full-length cDNA project: the Mammalian Gene Collection (MGC).</title>
        <authorList>
            <consortium name="The MGC Project Team"/>
        </authorList>
    </citation>
    <scope>NUCLEOTIDE SEQUENCE [LARGE SCALE MRNA] (ISOFORMS 1 AND 3)</scope>
    <source>
        <tissue>Leiomyosarcoma</tissue>
        <tissue>Placenta</tissue>
    </source>
</reference>
<reference key="6">
    <citation type="journal article" date="2006" name="Cell. Mol. Life Sci.">
        <title>Molecular characterization of the tumor-associated antigen AAA-TOB3.</title>
        <authorList>
            <person name="Schaffrik M."/>
            <person name="Mack B."/>
            <person name="Matthias C."/>
            <person name="Rauch J."/>
            <person name="Gires O."/>
        </authorList>
    </citation>
    <scope>IDENTIFICATION OF ISOFORMS 1 AND 3</scope>
    <scope>SUBCELLULAR LOCATION</scope>
    <scope>INDUCTION</scope>
    <scope>TISSUE SPECIFICITY</scope>
</reference>
<reference key="7">
    <citation type="journal article" date="2008" name="J. Biol. Chem.">
        <title>The layered structure of human mitochondrial DNA nucleoids.</title>
        <authorList>
            <person name="Bogenhagen D.F."/>
            <person name="Rousseau D."/>
            <person name="Burke S."/>
        </authorList>
    </citation>
    <scope>SUBCELLULAR LOCATION</scope>
    <scope>TOPOLOGY</scope>
</reference>
<reference key="8">
    <citation type="journal article" date="2009" name="Science">
        <title>Lysine acetylation targets protein complexes and co-regulates major cellular functions.</title>
        <authorList>
            <person name="Choudhary C."/>
            <person name="Kumar C."/>
            <person name="Gnad F."/>
            <person name="Nielsen M.L."/>
            <person name="Rehman M."/>
            <person name="Walther T.C."/>
            <person name="Olsen J.V."/>
            <person name="Mann M."/>
        </authorList>
    </citation>
    <scope>ACETYLATION [LARGE SCALE ANALYSIS] AT LYS-427</scope>
    <scope>IDENTIFICATION BY MASS SPECTROMETRY [LARGE SCALE ANALYSIS]</scope>
</reference>
<reference key="9">
    <citation type="journal article" date="2011" name="BMC Syst. Biol.">
        <title>Initial characterization of the human central proteome.</title>
        <authorList>
            <person name="Burkard T.R."/>
            <person name="Planyavsky M."/>
            <person name="Kaupe I."/>
            <person name="Breitwieser F.P."/>
            <person name="Buerckstuemmer T."/>
            <person name="Bennett K.L."/>
            <person name="Superti-Furga G."/>
            <person name="Colinge J."/>
        </authorList>
    </citation>
    <scope>IDENTIFICATION BY MASS SPECTROMETRY [LARGE SCALE ANALYSIS]</scope>
</reference>
<reference key="10">
    <citation type="journal article" date="2012" name="Mitochondrion">
        <title>ATAD3B is a human embryonic stem cell specific mitochondrial protein, re-expressed in cancer cells, that functions as dominant negative for the ubiquitous ATAD3A.</title>
        <authorList>
            <person name="Merle N."/>
            <person name="Feraud O."/>
            <person name="Gilquin B."/>
            <person name="Hubstenberger A."/>
            <person name="Kieffer-Jacquinot S."/>
            <person name="Assard N."/>
            <person name="Bennaceur-Griscelli A."/>
            <person name="Honnorat J."/>
            <person name="Baudier J."/>
        </authorList>
    </citation>
    <scope>FUNCTION</scope>
    <scope>INTERACTION WITH ATAD3A</scope>
    <scope>TISSUE SPECIFICITY</scope>
    <scope>DEVELOPMENTAL STAGE</scope>
    <scope>TOPOLOGY</scope>
</reference>
<reference key="11">
    <citation type="journal article" date="2012" name="Mol. Cell. Proteomics">
        <title>Comparative large-scale characterisation of plant vs. mammal proteins reveals similar and idiosyncratic N-alpha acetylation features.</title>
        <authorList>
            <person name="Bienvenut W.V."/>
            <person name="Sumpton D."/>
            <person name="Martinez A."/>
            <person name="Lilla S."/>
            <person name="Espagne C."/>
            <person name="Meinnel T."/>
            <person name="Giglione C."/>
        </authorList>
    </citation>
    <scope>ACETYLATION [LARGE SCALE ANALYSIS] AT SER-2</scope>
    <scope>CLEAVAGE OF INITIATOR METHIONINE [LARGE SCALE ANALYSIS]</scope>
    <scope>IDENTIFICATION BY MASS SPECTROMETRY [LARGE SCALE ANALYSIS]</scope>
</reference>
<reference key="12">
    <citation type="journal article" date="2012" name="Nucleic Acids Res.">
        <title>Mitochondrial nucleoid interacting proteins support mitochondrial protein synthesis.</title>
        <authorList>
            <person name="He J."/>
            <person name="Cooper H.M."/>
            <person name="Reyes A."/>
            <person name="Di Re M."/>
            <person name="Sembongi H."/>
            <person name="Litwin T.R."/>
            <person name="Gao J."/>
            <person name="Neuman K.C."/>
            <person name="Fearnley I.M."/>
            <person name="Spinazzola A."/>
            <person name="Walker J.E."/>
            <person name="Holt I.J."/>
        </authorList>
    </citation>
    <scope>INTERACTION WITH PROTEINS INVOLVED IN MITOCHONDRIAL TRANSLATION; RNA METABOLISM; ATAD3A AND GADD45GIP1</scope>
</reference>
<comment type="function">
    <text evidence="7">May play a role in a mitochondrial network organization typical for stem cells, characterized by reduced mitochondrial metabolism, low mtDNA copies and fragmentated mitochondrial network. May act by suppressing ATAD3A function, interfering with ATAD3A interaction with matrix nucleoid complexes.</text>
</comment>
<comment type="subunit">
    <text evidence="6 7">Forms heterooligomers with ATAD3A. Interacts with components of the mitochondrial ribosome, including MRPL11 and MRPS18B, and with other proteins involved in mitochondrial RNA metabolism, possibly via interaction with ATAD3A. Interacts with GADD45GIP1.</text>
</comment>
<comment type="subcellular location">
    <subcellularLocation>
        <location evidence="4 5">Mitochondrion inner membrane</location>
        <topology evidence="4 5">Peripheral membrane protein</topology>
    </subcellularLocation>
    <text evidence="6">Has been found to co-purify with nucleoids (PubMed:22453275). Since it does not face the mitochondrial matrix, the association with nucleoids could be mediated by ATAD3A.</text>
</comment>
<comment type="alternative products">
    <event type="alternative splicing"/>
    <isoform>
        <id>Q5T9A4-1</id>
        <name>1</name>
        <name>AAA-TOB3l</name>
        <sequence type="displayed"/>
    </isoform>
    <isoform>
        <id>Q5T9A4-2</id>
        <name>2</name>
        <sequence type="described" ref="VSP_015637 VSP_015640 VSP_015641 VSP_015642"/>
    </isoform>
    <isoform>
        <id>Q5T9A4-3</id>
        <name>3</name>
        <name>AAA-TOB3s</name>
        <sequence type="described" ref="VSP_015638 VSP_015639"/>
    </isoform>
</comment>
<comment type="tissue specificity">
    <text evidence="4 7">Tends to be down-regulated in differentiated cells and re-expressed in pluripotent stem cells or cancer cells (at protein level).</text>
</comment>
<comment type="developmental stage">
    <text evidence="7">Expressed in proliferating embryonic stem cells and down-regulated during differentiation.</text>
</comment>
<comment type="induction">
    <text evidence="4">Up-regulated by MYC.</text>
</comment>
<comment type="similarity">
    <text evidence="11">Belongs to the AAA ATPase family.</text>
</comment>
<comment type="sequence caution" evidence="11">
    <conflict type="erroneous initiation">
        <sequence resource="EMBL-CDS" id="BAA86587"/>
    </conflict>
    <text>Extended N-terminus.</text>
</comment>
<feature type="initiator methionine" description="Removed" evidence="13">
    <location>
        <position position="1"/>
    </location>
</feature>
<feature type="chain" id="PRO_0000084800" description="ATPase family AAA domain-containing protein 3B">
    <location>
        <begin position="2"/>
        <end position="648"/>
    </location>
</feature>
<feature type="topological domain" description="Mitochondrial intermembrane" evidence="2">
    <location>
        <begin position="2"/>
        <end position="246"/>
    </location>
</feature>
<feature type="intramembrane region" description="Helical" evidence="2">
    <location>
        <begin position="247"/>
        <end position="264"/>
    </location>
</feature>
<feature type="topological domain" description="Mitochondrial intermembrane" evidence="2">
    <location>
        <begin position="265"/>
        <end position="648"/>
    </location>
</feature>
<feature type="region of interest" description="Disordered" evidence="3">
    <location>
        <begin position="1"/>
        <end position="54"/>
    </location>
</feature>
<feature type="region of interest" description="Disordered" evidence="3">
    <location>
        <begin position="111"/>
        <end position="134"/>
    </location>
</feature>
<feature type="coiled-coil region" evidence="2">
    <location>
        <begin position="69"/>
        <end position="214"/>
    </location>
</feature>
<feature type="compositionally biased region" description="Pro residues" evidence="3">
    <location>
        <begin position="17"/>
        <end position="26"/>
    </location>
</feature>
<feature type="compositionally biased region" description="Basic and acidic residues" evidence="3">
    <location>
        <begin position="32"/>
        <end position="48"/>
    </location>
</feature>
<feature type="compositionally biased region" description="Basic and acidic residues" evidence="3">
    <location>
        <begin position="111"/>
        <end position="125"/>
    </location>
</feature>
<feature type="binding site" evidence="2">
    <location>
        <begin position="352"/>
        <end position="359"/>
    </location>
    <ligand>
        <name>ATP</name>
        <dbReference type="ChEBI" id="CHEBI:30616"/>
    </ligand>
</feature>
<feature type="modified residue" description="N-acetylserine" evidence="13">
    <location>
        <position position="2"/>
    </location>
</feature>
<feature type="modified residue" description="N6-acetyllysine" evidence="12">
    <location>
        <position position="427"/>
    </location>
</feature>
<feature type="modified residue" description="N6-acetyllysine" evidence="1">
    <location>
        <position position="495"/>
    </location>
</feature>
<feature type="splice variant" id="VSP_015637" description="In isoform 2." evidence="9">
    <location>
        <begin position="1"/>
        <end position="118"/>
    </location>
</feature>
<feature type="splice variant" id="VSP_015638" description="In isoform 3." evidence="8 10">
    <location>
        <begin position="1"/>
        <end position="46"/>
    </location>
</feature>
<feature type="splice variant" id="VSP_015639" description="In isoform 3." evidence="8 10">
    <original>WSNFDPTGLERAAKAARELEHSRYAKEALNLAQMQEQTLQLEQQSKLK</original>
    <variation>MQLEALNLLHTLVWARSLCRAGAVQTQERLSGSASPEQVPAGECCALQ</variation>
    <location>
        <begin position="47"/>
        <end position="94"/>
    </location>
</feature>
<feature type="splice variant" id="VSP_015640" description="In isoform 2." evidence="9">
    <original>LSEETRQHQA</original>
    <variation>MCLCRPLLPQ</variation>
    <location>
        <begin position="119"/>
        <end position="128"/>
    </location>
</feature>
<feature type="splice variant" id="VSP_015641" description="In isoform 2." evidence="9">
    <original>AGLTLLAVGVYSAKNATAVTGRFIEARLGKPSL</original>
    <variation>NIFIKQGWQVAERQHVGASWSPRSCPCRLCTAL</variation>
    <location>
        <begin position="252"/>
        <end position="284"/>
    </location>
</feature>
<feature type="splice variant" id="VSP_015642" description="In isoform 2." evidence="9">
    <location>
        <begin position="285"/>
        <end position="648"/>
    </location>
</feature>
<feature type="sequence variant" id="VAR_048120" description="In dbSNP:rs1240504.">
    <original>V</original>
    <variation>I</variation>
    <location>
        <position position="7"/>
    </location>
</feature>
<feature type="sequence conflict" description="In Ref. 5; AAH02542/AAH18701." evidence="11" ref="5">
    <original>Q</original>
    <variation>R</variation>
    <location>
        <position position="149"/>
    </location>
</feature>
<feature type="sequence conflict" description="In Ref. 2; AK128357." evidence="11" ref="2">
    <original>E</original>
    <variation>V</variation>
    <location>
        <position position="153"/>
    </location>
</feature>
<dbReference type="EMBL" id="AB033099">
    <property type="protein sequence ID" value="BAA86587.1"/>
    <property type="status" value="ALT_INIT"/>
    <property type="molecule type" value="mRNA"/>
</dbReference>
<dbReference type="EMBL" id="AK128357">
    <property type="status" value="NOT_ANNOTATED_CDS"/>
    <property type="molecule type" value="mRNA"/>
</dbReference>
<dbReference type="EMBL" id="AK290586">
    <property type="protein sequence ID" value="BAF83275.1"/>
    <property type="molecule type" value="mRNA"/>
</dbReference>
<dbReference type="EMBL" id="AL157945">
    <property type="status" value="NOT_ANNOTATED_CDS"/>
    <property type="molecule type" value="Genomic_DNA"/>
</dbReference>
<dbReference type="EMBL" id="CH471183">
    <property type="protein sequence ID" value="EAW56193.1"/>
    <property type="molecule type" value="Genomic_DNA"/>
</dbReference>
<dbReference type="EMBL" id="BC002542">
    <property type="protein sequence ID" value="AAH02542.1"/>
    <property type="molecule type" value="mRNA"/>
</dbReference>
<dbReference type="EMBL" id="BC009938">
    <property type="status" value="NOT_ANNOTATED_CDS"/>
    <property type="molecule type" value="mRNA"/>
</dbReference>
<dbReference type="EMBL" id="BC018701">
    <property type="protein sequence ID" value="AAH18701.1"/>
    <property type="molecule type" value="mRNA"/>
</dbReference>
<dbReference type="CCDS" id="CCDS30.1">
    <molecule id="Q5T9A4-1"/>
</dbReference>
<dbReference type="RefSeq" id="NP_001304167.1">
    <molecule id="Q5T9A4-3"/>
    <property type="nucleotide sequence ID" value="NM_001317238.2"/>
</dbReference>
<dbReference type="RefSeq" id="NP_114127.3">
    <molecule id="Q5T9A4-1"/>
    <property type="nucleotide sequence ID" value="NM_031921.5"/>
</dbReference>
<dbReference type="RefSeq" id="XP_054194972.1">
    <molecule id="Q5T9A4-3"/>
    <property type="nucleotide sequence ID" value="XM_054338997.1"/>
</dbReference>
<dbReference type="SMR" id="Q5T9A4"/>
<dbReference type="BioGRID" id="123774">
    <property type="interactions" value="239"/>
</dbReference>
<dbReference type="FunCoup" id="Q5T9A4">
    <property type="interactions" value="1961"/>
</dbReference>
<dbReference type="IntAct" id="Q5T9A4">
    <property type="interactions" value="166"/>
</dbReference>
<dbReference type="MINT" id="Q5T9A4"/>
<dbReference type="STRING" id="9606.ENSP00000500094"/>
<dbReference type="iPTMnet" id="Q5T9A4"/>
<dbReference type="PhosphoSitePlus" id="Q5T9A4"/>
<dbReference type="SwissPalm" id="Q5T9A4"/>
<dbReference type="BioMuta" id="ATAD3B"/>
<dbReference type="DMDM" id="74745646"/>
<dbReference type="jPOST" id="Q5T9A4"/>
<dbReference type="MassIVE" id="Q5T9A4"/>
<dbReference type="PaxDb" id="9606-ENSP00000311766"/>
<dbReference type="PeptideAtlas" id="Q5T9A4"/>
<dbReference type="ProteomicsDB" id="64783">
    <molecule id="Q5T9A4-1"/>
</dbReference>
<dbReference type="ProteomicsDB" id="64784">
    <molecule id="Q5T9A4-2"/>
</dbReference>
<dbReference type="ProteomicsDB" id="64785">
    <molecule id="Q5T9A4-3"/>
</dbReference>
<dbReference type="Pumba" id="Q5T9A4"/>
<dbReference type="Antibodypedia" id="26380">
    <property type="antibodies" value="83 antibodies from 25 providers"/>
</dbReference>
<dbReference type="DNASU" id="83858"/>
<dbReference type="Ensembl" id="ENST00000673477.1">
    <molecule id="Q5T9A4-1"/>
    <property type="protein sequence ID" value="ENSP00000500094.1"/>
    <property type="gene ID" value="ENSG00000160072.20"/>
</dbReference>
<dbReference type="GeneID" id="83858"/>
<dbReference type="KEGG" id="hsa:83858"/>
<dbReference type="MANE-Select" id="ENST00000673477.1">
    <property type="protein sequence ID" value="ENSP00000500094.1"/>
    <property type="RefSeq nucleotide sequence ID" value="NM_031921.6"/>
    <property type="RefSeq protein sequence ID" value="NP_114127.3"/>
</dbReference>
<dbReference type="UCSC" id="uc001afv.4">
    <molecule id="Q5T9A4-1"/>
    <property type="organism name" value="human"/>
</dbReference>
<dbReference type="AGR" id="HGNC:24007"/>
<dbReference type="CTD" id="83858"/>
<dbReference type="DisGeNET" id="83858"/>
<dbReference type="GeneCards" id="ATAD3B"/>
<dbReference type="HGNC" id="HGNC:24007">
    <property type="gene designation" value="ATAD3B"/>
</dbReference>
<dbReference type="HPA" id="ENSG00000160072">
    <property type="expression patterns" value="Low tissue specificity"/>
</dbReference>
<dbReference type="MalaCards" id="ATAD3B"/>
<dbReference type="MIM" id="612317">
    <property type="type" value="gene"/>
</dbReference>
<dbReference type="neXtProt" id="NX_Q5T9A4"/>
<dbReference type="OpenTargets" id="ENSG00000160072"/>
<dbReference type="Orphanet" id="656279">
    <property type="disease" value="1p36.33 duplication syndrome"/>
</dbReference>
<dbReference type="PharmGKB" id="PA134993325"/>
<dbReference type="VEuPathDB" id="HostDB:ENSG00000160072"/>
<dbReference type="eggNOG" id="KOG0742">
    <property type="taxonomic scope" value="Eukaryota"/>
</dbReference>
<dbReference type="GeneTree" id="ENSGT00940000167742"/>
<dbReference type="HOGENOM" id="CLU_011488_2_0_1"/>
<dbReference type="InParanoid" id="Q5T9A4"/>
<dbReference type="OMA" id="PRSRNDN"/>
<dbReference type="OrthoDB" id="199596at2759"/>
<dbReference type="PAN-GO" id="Q5T9A4">
    <property type="GO annotations" value="2 GO annotations based on evolutionary models"/>
</dbReference>
<dbReference type="PhylomeDB" id="Q5T9A4"/>
<dbReference type="TreeFam" id="TF313922"/>
<dbReference type="PathwayCommons" id="Q5T9A4"/>
<dbReference type="Reactome" id="R-HSA-6798695">
    <property type="pathway name" value="Neutrophil degranulation"/>
</dbReference>
<dbReference type="SignaLink" id="Q5T9A4"/>
<dbReference type="BioGRID-ORCS" id="83858">
    <property type="hits" value="30 hits in 1153 CRISPR screens"/>
</dbReference>
<dbReference type="CD-CODE" id="91857CE7">
    <property type="entry name" value="Nucleolus"/>
</dbReference>
<dbReference type="ChiTaRS" id="ATAD3B">
    <property type="organism name" value="human"/>
</dbReference>
<dbReference type="GenomeRNAi" id="83858"/>
<dbReference type="Pharos" id="Q5T9A4">
    <property type="development level" value="Tbio"/>
</dbReference>
<dbReference type="PRO" id="PR:Q5T9A4"/>
<dbReference type="Proteomes" id="UP000005640">
    <property type="component" value="Chromosome 1"/>
</dbReference>
<dbReference type="RNAct" id="Q5T9A4">
    <property type="molecule type" value="protein"/>
</dbReference>
<dbReference type="Bgee" id="ENSG00000160072">
    <property type="expression patterns" value="Expressed in adenohypophysis and 173 other cell types or tissues"/>
</dbReference>
<dbReference type="ExpressionAtlas" id="Q5T9A4">
    <property type="expression patterns" value="baseline and differential"/>
</dbReference>
<dbReference type="GO" id="GO:0101003">
    <property type="term" value="C:ficolin-1-rich granule membrane"/>
    <property type="evidence" value="ECO:0000304"/>
    <property type="project" value="Reactome"/>
</dbReference>
<dbReference type="GO" id="GO:0005743">
    <property type="term" value="C:mitochondrial inner membrane"/>
    <property type="evidence" value="ECO:0007669"/>
    <property type="project" value="UniProtKB-SubCell"/>
</dbReference>
<dbReference type="GO" id="GO:0005739">
    <property type="term" value="C:mitochondrion"/>
    <property type="evidence" value="ECO:0000314"/>
    <property type="project" value="HPA"/>
</dbReference>
<dbReference type="GO" id="GO:0005886">
    <property type="term" value="C:plasma membrane"/>
    <property type="evidence" value="ECO:0000304"/>
    <property type="project" value="Reactome"/>
</dbReference>
<dbReference type="GO" id="GO:0030667">
    <property type="term" value="C:secretory granule membrane"/>
    <property type="evidence" value="ECO:0000304"/>
    <property type="project" value="Reactome"/>
</dbReference>
<dbReference type="GO" id="GO:0005524">
    <property type="term" value="F:ATP binding"/>
    <property type="evidence" value="ECO:0007669"/>
    <property type="project" value="UniProtKB-KW"/>
</dbReference>
<dbReference type="GO" id="GO:0016887">
    <property type="term" value="F:ATP hydrolysis activity"/>
    <property type="evidence" value="ECO:0007669"/>
    <property type="project" value="InterPro"/>
</dbReference>
<dbReference type="GO" id="GO:0007005">
    <property type="term" value="P:mitochondrion organization"/>
    <property type="evidence" value="ECO:0000318"/>
    <property type="project" value="GO_Central"/>
</dbReference>
<dbReference type="CDD" id="cd19512">
    <property type="entry name" value="RecA-like_ATAD3-like"/>
    <property type="match status" value="1"/>
</dbReference>
<dbReference type="FunFam" id="3.40.50.300:FF:000470">
    <property type="entry name" value="ATPase family, AAA domain containing 3A"/>
    <property type="match status" value="1"/>
</dbReference>
<dbReference type="Gene3D" id="3.40.50.300">
    <property type="entry name" value="P-loop containing nucleotide triphosphate hydrolases"/>
    <property type="match status" value="1"/>
</dbReference>
<dbReference type="InterPro" id="IPR003593">
    <property type="entry name" value="AAA+_ATPase"/>
</dbReference>
<dbReference type="InterPro" id="IPR021911">
    <property type="entry name" value="ATAD3_N"/>
</dbReference>
<dbReference type="InterPro" id="IPR003959">
    <property type="entry name" value="ATPase_AAA_core"/>
</dbReference>
<dbReference type="InterPro" id="IPR027417">
    <property type="entry name" value="P-loop_NTPase"/>
</dbReference>
<dbReference type="PANTHER" id="PTHR23075:SF2">
    <property type="entry name" value="ATPASE FAMILY AAA DOMAIN-CONTAINING PROTEIN 3B"/>
    <property type="match status" value="1"/>
</dbReference>
<dbReference type="PANTHER" id="PTHR23075">
    <property type="entry name" value="PUTATIVE ATP-ASE"/>
    <property type="match status" value="1"/>
</dbReference>
<dbReference type="Pfam" id="PF00004">
    <property type="entry name" value="AAA"/>
    <property type="match status" value="1"/>
</dbReference>
<dbReference type="Pfam" id="PF12037">
    <property type="entry name" value="ATAD3_N"/>
    <property type="match status" value="1"/>
</dbReference>
<dbReference type="SMART" id="SM00382">
    <property type="entry name" value="AAA"/>
    <property type="match status" value="1"/>
</dbReference>
<dbReference type="SUPFAM" id="SSF52540">
    <property type="entry name" value="P-loop containing nucleoside triphosphate hydrolases"/>
    <property type="match status" value="1"/>
</dbReference>
<gene>
    <name type="primary">ATAD3B</name>
    <name type="synonym">KIAA1273</name>
    <name type="synonym">TOB3</name>
</gene>
<keyword id="KW-0007">Acetylation</keyword>
<keyword id="KW-0025">Alternative splicing</keyword>
<keyword id="KW-0067">ATP-binding</keyword>
<keyword id="KW-0175">Coiled coil</keyword>
<keyword id="KW-0472">Membrane</keyword>
<keyword id="KW-0496">Mitochondrion</keyword>
<keyword id="KW-0999">Mitochondrion inner membrane</keyword>
<keyword id="KW-0547">Nucleotide-binding</keyword>
<keyword id="KW-1267">Proteomics identification</keyword>
<keyword id="KW-1185">Reference proteome</keyword>
<organism>
    <name type="scientific">Homo sapiens</name>
    <name type="common">Human</name>
    <dbReference type="NCBI Taxonomy" id="9606"/>
    <lineage>
        <taxon>Eukaryota</taxon>
        <taxon>Metazoa</taxon>
        <taxon>Chordata</taxon>
        <taxon>Craniata</taxon>
        <taxon>Vertebrata</taxon>
        <taxon>Euteleostomi</taxon>
        <taxon>Mammalia</taxon>
        <taxon>Eutheria</taxon>
        <taxon>Euarchontoglires</taxon>
        <taxon>Primates</taxon>
        <taxon>Haplorrhini</taxon>
        <taxon>Catarrhini</taxon>
        <taxon>Hominidae</taxon>
        <taxon>Homo</taxon>
    </lineage>
</organism>
<evidence type="ECO:0000250" key="1">
    <source>
        <dbReference type="UniProtKB" id="Q925I1"/>
    </source>
</evidence>
<evidence type="ECO:0000255" key="2"/>
<evidence type="ECO:0000256" key="3">
    <source>
        <dbReference type="SAM" id="MobiDB-lite"/>
    </source>
</evidence>
<evidence type="ECO:0000269" key="4">
    <source>
    </source>
</evidence>
<evidence type="ECO:0000269" key="5">
    <source>
    </source>
</evidence>
<evidence type="ECO:0000269" key="6">
    <source>
    </source>
</evidence>
<evidence type="ECO:0000269" key="7">
    <source>
    </source>
</evidence>
<evidence type="ECO:0000303" key="8">
    <source>
    </source>
</evidence>
<evidence type="ECO:0000303" key="9">
    <source>
    </source>
</evidence>
<evidence type="ECO:0000303" key="10">
    <source>
    </source>
</evidence>
<evidence type="ECO:0000305" key="11"/>
<evidence type="ECO:0007744" key="12">
    <source>
    </source>
</evidence>
<evidence type="ECO:0007744" key="13">
    <source>
    </source>
</evidence>
<protein>
    <recommendedName>
        <fullName>ATPase family AAA domain-containing protein 3B</fullName>
    </recommendedName>
    <alternativeName>
        <fullName>AAA-TOB3</fullName>
    </alternativeName>
</protein>
<proteinExistence type="evidence at protein level"/>
<sequence length="648" mass="72573">MSWLFGVNKGPKGEGAGPPPPLPPAQPGAEGGGDRGLGDRPAPKDKWSNFDPTGLERAAKAARELEHSRYAKEALNLAQMQEQTLQLEQQSKLKEYEAAVEQLKSEQIRAQAEERRKTLSEETRQHQARAQYQDKLARQRYEDQLKQQQLLNEENLRKQEESVQKQEAMRRATVEREMELRHKNEMLRVETEARARAKAERENADIIREQIRLKASEHRQTVLESIRTAGTLFGEGFRAFVTDRDKVTATVAGLTLLAVGVYSAKNATAVTGRFIEARLGKPSLVRETSRITVLEALRHPIQVSRRLLSRPQDVLEGVVLSPSLEARVRDIAIATRNTKKNRGLYRHILLYGPPGTGKTLFAKKLALHSGMDYAIMTGGDVAPMGREGVTAMHKLFDWANTSRRGLLLFMDEADAFLRKRATEEISKDLRATLNAFLYHMGQHSNKFMLVLASNLPEQFDCAINSRIDVMVHFDLPQQEERERLVRLHFDNCVLKPATEGKRRLKLAQFDYGRKCSEVARLTEGMSGREIAQLAVSWQATAYASKDGVLTEAMMDACVQDAVQQYRQKMRWLKAEGPGRGVEHPLSGVQGETLTSWSLATDPSYPCLAGPCTFRICSWMGTGLCPGPLSPRMSCGGGRPFCPPGHPLL</sequence>
<name>ATD3B_HUMAN</name>